<evidence type="ECO:0000250" key="1"/>
<evidence type="ECO:0000269" key="2">
    <source>
    </source>
</evidence>
<evidence type="ECO:0000305" key="3"/>
<name>GATP4_ORYSJ</name>
<gene>
    <name type="primary">GABA-T</name>
    <name type="ordered locus">Os02g0112900</name>
    <name type="ordered locus">LOC_Os02g02210</name>
    <name type="ORF">OJ1399_H05.13</name>
    <name type="ORF">OsJ_05081</name>
</gene>
<keyword id="KW-0032">Aminotransferase</keyword>
<keyword id="KW-0963">Cytoplasm</keyword>
<keyword id="KW-0663">Pyridoxal phosphate</keyword>
<keyword id="KW-1185">Reference proteome</keyword>
<keyword id="KW-0808">Transferase</keyword>
<organism>
    <name type="scientific">Oryza sativa subsp. japonica</name>
    <name type="common">Rice</name>
    <dbReference type="NCBI Taxonomy" id="39947"/>
    <lineage>
        <taxon>Eukaryota</taxon>
        <taxon>Viridiplantae</taxon>
        <taxon>Streptophyta</taxon>
        <taxon>Embryophyta</taxon>
        <taxon>Tracheophyta</taxon>
        <taxon>Spermatophyta</taxon>
        <taxon>Magnoliopsida</taxon>
        <taxon>Liliopsida</taxon>
        <taxon>Poales</taxon>
        <taxon>Poaceae</taxon>
        <taxon>BOP clade</taxon>
        <taxon>Oryzoideae</taxon>
        <taxon>Oryzeae</taxon>
        <taxon>Oryzinae</taxon>
        <taxon>Oryza</taxon>
        <taxon>Oryza sativa</taxon>
    </lineage>
</organism>
<sequence>MTTPHGLLQYSSGAFSDQVPADDSAEEHGVKDHAMLAPFTAAWQTAISPPLVIERSEGCYVYDVNGTKYLDALAGLLSTALGGSEPRLVKAATEQLNKLPFYHSFWNHTTRPSLDLAKELISMFTAREMGKVFFTNSGSEANDSQVKIVWYYNNALGRPKKKNIISRTQSYHGTTFISASLSGLPTLHQDFDLPGRFVLHTDCPHYWRFHLPGETEEEFATRLADNLENLILKQGPETIAAFIAEPVIGAGGVILPPKTYFEKIQAVVKKYDILFIVDEVITGFGRLGTMFGSDLYNIKPDLVSLAKALSSAYAPIGAILVSPEISDVIHSHSNKLGTFAHGFTYSGHPVSCAVALEALKIYRERDIPGHVTHVAQRFQEGIKAFAAGSPIVGETRGVGLLIATEFTDNKSPYELFPFEWGVGEIFGQECKKRGMMVKVLGNLIAMSPPLIITREEIDKLVSIYGEALKATEERVAELKSKKN</sequence>
<feature type="chain" id="PRO_0000416854" description="Probable gamma-aminobutyrate transaminase 4">
    <location>
        <begin position="1"/>
        <end position="483"/>
    </location>
</feature>
<feature type="binding site" evidence="1">
    <location>
        <begin position="138"/>
        <end position="139"/>
    </location>
    <ligand>
        <name>pyridoxal 5'-phosphate</name>
        <dbReference type="ChEBI" id="CHEBI:597326"/>
    </ligand>
</feature>
<feature type="binding site" evidence="1">
    <location>
        <position position="171"/>
    </location>
    <ligand>
        <name>substrate</name>
    </ligand>
</feature>
<feature type="binding site" evidence="1">
    <location>
        <position position="278"/>
    </location>
    <ligand>
        <name>pyridoxal 5'-phosphate</name>
        <dbReference type="ChEBI" id="CHEBI:597326"/>
    </ligand>
</feature>
<feature type="binding site" evidence="1">
    <location>
        <position position="307"/>
    </location>
    <ligand>
        <name>substrate</name>
    </ligand>
</feature>
<feature type="modified residue" description="N6-(pyridoxal phosphate)lysine" evidence="1">
    <location>
        <position position="307"/>
    </location>
</feature>
<feature type="sequence conflict" description="In Ref. 1; AAK11219." evidence="3" ref="1">
    <original>I</original>
    <variation>N</variation>
    <location>
        <position position="273"/>
    </location>
</feature>
<feature type="sequence conflict" description="In Ref. 1; AAK11219." evidence="3" ref="1">
    <original>G</original>
    <variation>E</variation>
    <location>
        <position position="285"/>
    </location>
</feature>
<reference key="1">
    <citation type="journal article" date="2006" name="J. Plant Res.">
        <title>Molecular cloning and differential expression of an gamma-aminobutyrate transaminase gene, OsGABA-T, in rice (Oryza sativa) leaves infected with blast fungus.</title>
        <authorList>
            <person name="Wu C."/>
            <person name="Zhou S."/>
            <person name="Zhang Q."/>
            <person name="Zhao W."/>
            <person name="Peng Y."/>
        </authorList>
    </citation>
    <scope>NUCLEOTIDE SEQUENCE [MRNA]</scope>
    <scope>INDUCTION</scope>
    <scope>TISSUE SPECIFICITY</scope>
</reference>
<reference key="2">
    <citation type="journal article" date="2005" name="Nature">
        <title>The map-based sequence of the rice genome.</title>
        <authorList>
            <consortium name="International rice genome sequencing project (IRGSP)"/>
        </authorList>
    </citation>
    <scope>NUCLEOTIDE SEQUENCE [LARGE SCALE GENOMIC DNA]</scope>
    <source>
        <strain>cv. Nipponbare</strain>
    </source>
</reference>
<reference key="3">
    <citation type="journal article" date="2008" name="Nucleic Acids Res.">
        <title>The rice annotation project database (RAP-DB): 2008 update.</title>
        <authorList>
            <consortium name="The rice annotation project (RAP)"/>
        </authorList>
    </citation>
    <scope>GENOME REANNOTATION</scope>
    <source>
        <strain>cv. Nipponbare</strain>
    </source>
</reference>
<reference key="4">
    <citation type="journal article" date="2013" name="Rice">
        <title>Improvement of the Oryza sativa Nipponbare reference genome using next generation sequence and optical map data.</title>
        <authorList>
            <person name="Kawahara Y."/>
            <person name="de la Bastide M."/>
            <person name="Hamilton J.P."/>
            <person name="Kanamori H."/>
            <person name="McCombie W.R."/>
            <person name="Ouyang S."/>
            <person name="Schwartz D.C."/>
            <person name="Tanaka T."/>
            <person name="Wu J."/>
            <person name="Zhou S."/>
            <person name="Childs K.L."/>
            <person name="Davidson R.M."/>
            <person name="Lin H."/>
            <person name="Quesada-Ocampo L."/>
            <person name="Vaillancourt B."/>
            <person name="Sakai H."/>
            <person name="Lee S.S."/>
            <person name="Kim J."/>
            <person name="Numa H."/>
            <person name="Itoh T."/>
            <person name="Buell C.R."/>
            <person name="Matsumoto T."/>
        </authorList>
    </citation>
    <scope>GENOME REANNOTATION</scope>
    <source>
        <strain>cv. Nipponbare</strain>
    </source>
</reference>
<reference key="5">
    <citation type="journal article" date="2005" name="PLoS Biol.">
        <title>The genomes of Oryza sativa: a history of duplications.</title>
        <authorList>
            <person name="Yu J."/>
            <person name="Wang J."/>
            <person name="Lin W."/>
            <person name="Li S."/>
            <person name="Li H."/>
            <person name="Zhou J."/>
            <person name="Ni P."/>
            <person name="Dong W."/>
            <person name="Hu S."/>
            <person name="Zeng C."/>
            <person name="Zhang J."/>
            <person name="Zhang Y."/>
            <person name="Li R."/>
            <person name="Xu Z."/>
            <person name="Li S."/>
            <person name="Li X."/>
            <person name="Zheng H."/>
            <person name="Cong L."/>
            <person name="Lin L."/>
            <person name="Yin J."/>
            <person name="Geng J."/>
            <person name="Li G."/>
            <person name="Shi J."/>
            <person name="Liu J."/>
            <person name="Lv H."/>
            <person name="Li J."/>
            <person name="Wang J."/>
            <person name="Deng Y."/>
            <person name="Ran L."/>
            <person name="Shi X."/>
            <person name="Wang X."/>
            <person name="Wu Q."/>
            <person name="Li C."/>
            <person name="Ren X."/>
            <person name="Wang J."/>
            <person name="Wang X."/>
            <person name="Li D."/>
            <person name="Liu D."/>
            <person name="Zhang X."/>
            <person name="Ji Z."/>
            <person name="Zhao W."/>
            <person name="Sun Y."/>
            <person name="Zhang Z."/>
            <person name="Bao J."/>
            <person name="Han Y."/>
            <person name="Dong L."/>
            <person name="Ji J."/>
            <person name="Chen P."/>
            <person name="Wu S."/>
            <person name="Liu J."/>
            <person name="Xiao Y."/>
            <person name="Bu D."/>
            <person name="Tan J."/>
            <person name="Yang L."/>
            <person name="Ye C."/>
            <person name="Zhang J."/>
            <person name="Xu J."/>
            <person name="Zhou Y."/>
            <person name="Yu Y."/>
            <person name="Zhang B."/>
            <person name="Zhuang S."/>
            <person name="Wei H."/>
            <person name="Liu B."/>
            <person name="Lei M."/>
            <person name="Yu H."/>
            <person name="Li Y."/>
            <person name="Xu H."/>
            <person name="Wei S."/>
            <person name="He X."/>
            <person name="Fang L."/>
            <person name="Zhang Z."/>
            <person name="Zhang Y."/>
            <person name="Huang X."/>
            <person name="Su Z."/>
            <person name="Tong W."/>
            <person name="Li J."/>
            <person name="Tong Z."/>
            <person name="Li S."/>
            <person name="Ye J."/>
            <person name="Wang L."/>
            <person name="Fang L."/>
            <person name="Lei T."/>
            <person name="Chen C.-S."/>
            <person name="Chen H.-C."/>
            <person name="Xu Z."/>
            <person name="Li H."/>
            <person name="Huang H."/>
            <person name="Zhang F."/>
            <person name="Xu H."/>
            <person name="Li N."/>
            <person name="Zhao C."/>
            <person name="Li S."/>
            <person name="Dong L."/>
            <person name="Huang Y."/>
            <person name="Li L."/>
            <person name="Xi Y."/>
            <person name="Qi Q."/>
            <person name="Li W."/>
            <person name="Zhang B."/>
            <person name="Hu W."/>
            <person name="Zhang Y."/>
            <person name="Tian X."/>
            <person name="Jiao Y."/>
            <person name="Liang X."/>
            <person name="Jin J."/>
            <person name="Gao L."/>
            <person name="Zheng W."/>
            <person name="Hao B."/>
            <person name="Liu S.-M."/>
            <person name="Wang W."/>
            <person name="Yuan L."/>
            <person name="Cao M."/>
            <person name="McDermott J."/>
            <person name="Samudrala R."/>
            <person name="Wang J."/>
            <person name="Wong G.K.-S."/>
            <person name="Yang H."/>
        </authorList>
    </citation>
    <scope>NUCLEOTIDE SEQUENCE [LARGE SCALE GENOMIC DNA]</scope>
    <source>
        <strain>cv. Nipponbare</strain>
    </source>
</reference>
<accession>Q6ZH29</accession>
<accession>A0A0P0VDU8</accession>
<accession>B9F225</accession>
<accession>Q9AXI9</accession>
<proteinExistence type="evidence at transcript level"/>
<dbReference type="EC" id="2.6.1.96"/>
<dbReference type="EMBL" id="AF324485">
    <property type="protein sequence ID" value="AAK11219.1"/>
    <property type="molecule type" value="mRNA"/>
</dbReference>
<dbReference type="EMBL" id="AP004090">
    <property type="protein sequence ID" value="BAD07632.1"/>
    <property type="molecule type" value="Genomic_DNA"/>
</dbReference>
<dbReference type="EMBL" id="AP008208">
    <property type="protein sequence ID" value="BAF07574.1"/>
    <property type="molecule type" value="Genomic_DNA"/>
</dbReference>
<dbReference type="EMBL" id="AP014958">
    <property type="protein sequence ID" value="BAS76627.1"/>
    <property type="molecule type" value="Genomic_DNA"/>
</dbReference>
<dbReference type="EMBL" id="CM000139">
    <property type="protein sequence ID" value="EEE56165.1"/>
    <property type="status" value="ALT_SEQ"/>
    <property type="molecule type" value="Genomic_DNA"/>
</dbReference>
<dbReference type="RefSeq" id="XP_015624768.1">
    <property type="nucleotide sequence ID" value="XM_015769282.1"/>
</dbReference>
<dbReference type="SMR" id="Q6ZH29"/>
<dbReference type="FunCoup" id="Q6ZH29">
    <property type="interactions" value="24"/>
</dbReference>
<dbReference type="STRING" id="39947.Q6ZH29"/>
<dbReference type="PaxDb" id="39947-Q6ZH29"/>
<dbReference type="EnsemblPlants" id="Os02t0112900-01">
    <property type="protein sequence ID" value="Os02t0112900-01"/>
    <property type="gene ID" value="Os02g0112900"/>
</dbReference>
<dbReference type="Gramene" id="Os02t0112900-01">
    <property type="protein sequence ID" value="Os02t0112900-01"/>
    <property type="gene ID" value="Os02g0112900"/>
</dbReference>
<dbReference type="KEGG" id="dosa:Os02g0112900"/>
<dbReference type="eggNOG" id="KOG1404">
    <property type="taxonomic scope" value="Eukaryota"/>
</dbReference>
<dbReference type="HOGENOM" id="CLU_016922_4_1_1"/>
<dbReference type="InParanoid" id="Q6ZH29"/>
<dbReference type="OMA" id="GGCFMHG"/>
<dbReference type="OrthoDB" id="10261433at2759"/>
<dbReference type="BRENDA" id="2.6.1.96">
    <property type="organism ID" value="4460"/>
</dbReference>
<dbReference type="Proteomes" id="UP000000763">
    <property type="component" value="Chromosome 2"/>
</dbReference>
<dbReference type="Proteomes" id="UP000007752">
    <property type="component" value="Chromosome 2"/>
</dbReference>
<dbReference type="Proteomes" id="UP000059680">
    <property type="component" value="Chromosome 2"/>
</dbReference>
<dbReference type="GO" id="GO:0005737">
    <property type="term" value="C:cytoplasm"/>
    <property type="evidence" value="ECO:0007669"/>
    <property type="project" value="UniProtKB-SubCell"/>
</dbReference>
<dbReference type="GO" id="GO:0034387">
    <property type="term" value="F:4-aminobutyrate:pyruvate transaminase activity"/>
    <property type="evidence" value="ECO:0007669"/>
    <property type="project" value="UniProtKB-EC"/>
</dbReference>
<dbReference type="GO" id="GO:0004015">
    <property type="term" value="F:adenosylmethionine-8-amino-7-oxononanoate transaminase activity"/>
    <property type="evidence" value="ECO:0000318"/>
    <property type="project" value="GO_Central"/>
</dbReference>
<dbReference type="GO" id="GO:0030170">
    <property type="term" value="F:pyridoxal phosphate binding"/>
    <property type="evidence" value="ECO:0007669"/>
    <property type="project" value="InterPro"/>
</dbReference>
<dbReference type="GO" id="GO:0009102">
    <property type="term" value="P:biotin biosynthetic process"/>
    <property type="evidence" value="ECO:0000318"/>
    <property type="project" value="GO_Central"/>
</dbReference>
<dbReference type="GO" id="GO:0009448">
    <property type="term" value="P:gamma-aminobutyric acid metabolic process"/>
    <property type="evidence" value="ECO:0000318"/>
    <property type="project" value="GO_Central"/>
</dbReference>
<dbReference type="CDD" id="cd00610">
    <property type="entry name" value="OAT_like"/>
    <property type="match status" value="1"/>
</dbReference>
<dbReference type="FunFam" id="3.40.640.10:FF:000014">
    <property type="entry name" value="Adenosylmethionine-8-amino-7-oxononanoate aminotransferase, probable"/>
    <property type="match status" value="1"/>
</dbReference>
<dbReference type="Gene3D" id="3.90.1150.10">
    <property type="entry name" value="Aspartate Aminotransferase, domain 1"/>
    <property type="match status" value="1"/>
</dbReference>
<dbReference type="Gene3D" id="3.40.640.10">
    <property type="entry name" value="Type I PLP-dependent aspartate aminotransferase-like (Major domain)"/>
    <property type="match status" value="1"/>
</dbReference>
<dbReference type="InterPro" id="IPR005814">
    <property type="entry name" value="Aminotrans_3"/>
</dbReference>
<dbReference type="InterPro" id="IPR049704">
    <property type="entry name" value="Aminotrans_3_PPA_site"/>
</dbReference>
<dbReference type="InterPro" id="IPR015424">
    <property type="entry name" value="PyrdxlP-dep_Trfase"/>
</dbReference>
<dbReference type="InterPro" id="IPR015421">
    <property type="entry name" value="PyrdxlP-dep_Trfase_major"/>
</dbReference>
<dbReference type="InterPro" id="IPR015422">
    <property type="entry name" value="PyrdxlP-dep_Trfase_small"/>
</dbReference>
<dbReference type="NCBIfam" id="NF004767">
    <property type="entry name" value="PRK06105.1"/>
    <property type="match status" value="1"/>
</dbReference>
<dbReference type="PANTHER" id="PTHR42684">
    <property type="entry name" value="ADENOSYLMETHIONINE-8-AMINO-7-OXONONANOATE AMINOTRANSFERASE"/>
    <property type="match status" value="1"/>
</dbReference>
<dbReference type="PANTHER" id="PTHR42684:SF8">
    <property type="entry name" value="GAMMA-AMINOBUTYRATE TRANSAMINASE 4-RELATED"/>
    <property type="match status" value="1"/>
</dbReference>
<dbReference type="Pfam" id="PF00202">
    <property type="entry name" value="Aminotran_3"/>
    <property type="match status" value="1"/>
</dbReference>
<dbReference type="PIRSF" id="PIRSF000521">
    <property type="entry name" value="Transaminase_4ab_Lys_Orn"/>
    <property type="match status" value="1"/>
</dbReference>
<dbReference type="SUPFAM" id="SSF53383">
    <property type="entry name" value="PLP-dependent transferases"/>
    <property type="match status" value="1"/>
</dbReference>
<dbReference type="PROSITE" id="PS00600">
    <property type="entry name" value="AA_TRANSFER_CLASS_3"/>
    <property type="match status" value="1"/>
</dbReference>
<protein>
    <recommendedName>
        <fullName>Probable gamma-aminobutyrate transaminase 4</fullName>
        <shortName>OsGABA-T</shortName>
        <ecNumber>2.6.1.96</ecNumber>
    </recommendedName>
</protein>
<comment type="function">
    <text evidence="1">Transaminase that degrades gamma-amino butyric acid (GABA).</text>
</comment>
<comment type="catalytic activity">
    <reaction>
        <text>4-aminobutanoate + pyruvate = succinate semialdehyde + L-alanine</text>
        <dbReference type="Rhea" id="RHEA:32263"/>
        <dbReference type="ChEBI" id="CHEBI:15361"/>
        <dbReference type="ChEBI" id="CHEBI:57706"/>
        <dbReference type="ChEBI" id="CHEBI:57972"/>
        <dbReference type="ChEBI" id="CHEBI:59888"/>
        <dbReference type="EC" id="2.6.1.96"/>
    </reaction>
</comment>
<comment type="catalytic activity">
    <reaction>
        <text>4-aminobutanoate + glyoxylate = succinate semialdehyde + glycine</text>
        <dbReference type="Rhea" id="RHEA:32267"/>
        <dbReference type="ChEBI" id="CHEBI:36655"/>
        <dbReference type="ChEBI" id="CHEBI:57305"/>
        <dbReference type="ChEBI" id="CHEBI:57706"/>
        <dbReference type="ChEBI" id="CHEBI:59888"/>
        <dbReference type="EC" id="2.6.1.96"/>
    </reaction>
</comment>
<comment type="subcellular location">
    <subcellularLocation>
        <location evidence="3">Cytoplasm</location>
    </subcellularLocation>
</comment>
<comment type="tissue specificity">
    <text evidence="2">Not detected in roots, stems, flowers or leaves of healthy plants.</text>
</comment>
<comment type="induction">
    <text evidence="2">Up-regulated by blast fungus, UV, mechanical wounding, salicylic acid and abscisic acid, but not by methyl jasmonate.</text>
</comment>
<comment type="similarity">
    <text evidence="3">Belongs to the class-III pyridoxal-phosphate-dependent aminotransferase family.</text>
</comment>
<comment type="sequence caution" evidence="3">
    <conflict type="erroneous gene model prediction">
        <sequence resource="EMBL-CDS" id="EEE56165"/>
    </conflict>
</comment>